<evidence type="ECO:0000255" key="1">
    <source>
        <dbReference type="HAMAP-Rule" id="MF_01396"/>
    </source>
</evidence>
<dbReference type="EMBL" id="CP000029">
    <property type="protein sequence ID" value="AAW55107.1"/>
    <property type="molecule type" value="Genomic_DNA"/>
</dbReference>
<dbReference type="RefSeq" id="WP_001048816.1">
    <property type="nucleotide sequence ID" value="NC_002976.3"/>
</dbReference>
<dbReference type="SMR" id="Q5HMB4"/>
<dbReference type="STRING" id="176279.SERP1714"/>
<dbReference type="GeneID" id="98346415"/>
<dbReference type="KEGG" id="ser:SERP1714"/>
<dbReference type="eggNOG" id="COG0636">
    <property type="taxonomic scope" value="Bacteria"/>
</dbReference>
<dbReference type="HOGENOM" id="CLU_148047_1_1_9"/>
<dbReference type="Proteomes" id="UP000000531">
    <property type="component" value="Chromosome"/>
</dbReference>
<dbReference type="GO" id="GO:0005886">
    <property type="term" value="C:plasma membrane"/>
    <property type="evidence" value="ECO:0007669"/>
    <property type="project" value="UniProtKB-SubCell"/>
</dbReference>
<dbReference type="GO" id="GO:0045259">
    <property type="term" value="C:proton-transporting ATP synthase complex"/>
    <property type="evidence" value="ECO:0007669"/>
    <property type="project" value="UniProtKB-KW"/>
</dbReference>
<dbReference type="GO" id="GO:0033177">
    <property type="term" value="C:proton-transporting two-sector ATPase complex, proton-transporting domain"/>
    <property type="evidence" value="ECO:0007669"/>
    <property type="project" value="InterPro"/>
</dbReference>
<dbReference type="GO" id="GO:0008289">
    <property type="term" value="F:lipid binding"/>
    <property type="evidence" value="ECO:0007669"/>
    <property type="project" value="UniProtKB-KW"/>
</dbReference>
<dbReference type="GO" id="GO:0046933">
    <property type="term" value="F:proton-transporting ATP synthase activity, rotational mechanism"/>
    <property type="evidence" value="ECO:0007669"/>
    <property type="project" value="UniProtKB-UniRule"/>
</dbReference>
<dbReference type="CDD" id="cd18185">
    <property type="entry name" value="ATP-synt_Fo_c_ATPE"/>
    <property type="match status" value="1"/>
</dbReference>
<dbReference type="FunFam" id="1.20.20.10:FF:000004">
    <property type="entry name" value="ATP synthase subunit c"/>
    <property type="match status" value="1"/>
</dbReference>
<dbReference type="Gene3D" id="1.20.20.10">
    <property type="entry name" value="F1F0 ATP synthase subunit C"/>
    <property type="match status" value="1"/>
</dbReference>
<dbReference type="HAMAP" id="MF_01396">
    <property type="entry name" value="ATP_synth_c_bact"/>
    <property type="match status" value="1"/>
</dbReference>
<dbReference type="InterPro" id="IPR005953">
    <property type="entry name" value="ATP_synth_csu_bac/chlpt"/>
</dbReference>
<dbReference type="InterPro" id="IPR000454">
    <property type="entry name" value="ATP_synth_F0_csu"/>
</dbReference>
<dbReference type="InterPro" id="IPR020537">
    <property type="entry name" value="ATP_synth_F0_csu_DDCD_BS"/>
</dbReference>
<dbReference type="InterPro" id="IPR038662">
    <property type="entry name" value="ATP_synth_F0_csu_sf"/>
</dbReference>
<dbReference type="InterPro" id="IPR002379">
    <property type="entry name" value="ATPase_proteolipid_c-like_dom"/>
</dbReference>
<dbReference type="InterPro" id="IPR035921">
    <property type="entry name" value="F/V-ATP_Csub_sf"/>
</dbReference>
<dbReference type="NCBIfam" id="TIGR01260">
    <property type="entry name" value="ATP_synt_c"/>
    <property type="match status" value="1"/>
</dbReference>
<dbReference type="NCBIfam" id="NF005363">
    <property type="entry name" value="PRK06876.1"/>
    <property type="match status" value="1"/>
</dbReference>
<dbReference type="Pfam" id="PF00137">
    <property type="entry name" value="ATP-synt_C"/>
    <property type="match status" value="1"/>
</dbReference>
<dbReference type="PRINTS" id="PR00124">
    <property type="entry name" value="ATPASEC"/>
</dbReference>
<dbReference type="SUPFAM" id="SSF81333">
    <property type="entry name" value="F1F0 ATP synthase subunit C"/>
    <property type="match status" value="1"/>
</dbReference>
<dbReference type="PROSITE" id="PS00605">
    <property type="entry name" value="ATPASE_C"/>
    <property type="match status" value="1"/>
</dbReference>
<gene>
    <name evidence="1" type="primary">atpE</name>
    <name type="ordered locus">SERP1714</name>
</gene>
<sequence length="70" mass="6979">MNLIAAAIAIGLSALGAGIGNGLIVSRTVEGVARQPEARGQLMGIMFIGVGLVEALPIIGVVIAFMTFAG</sequence>
<name>ATPL_STAEQ</name>
<comment type="function">
    <text evidence="1">F(1)F(0) ATP synthase produces ATP from ADP in the presence of a proton or sodium gradient. F-type ATPases consist of two structural domains, F(1) containing the extramembraneous catalytic core and F(0) containing the membrane proton channel, linked together by a central stalk and a peripheral stalk. During catalysis, ATP synthesis in the catalytic domain of F(1) is coupled via a rotary mechanism of the central stalk subunits to proton translocation.</text>
</comment>
<comment type="function">
    <text evidence="1">Key component of the F(0) channel; it plays a direct role in translocation across the membrane. A homomeric c-ring of between 10-14 subunits forms the central stalk rotor element with the F(1) delta and epsilon subunits.</text>
</comment>
<comment type="subunit">
    <text evidence="1">F-type ATPases have 2 components, F(1) - the catalytic core - and F(0) - the membrane proton channel. F(1) has five subunits: alpha(3), beta(3), gamma(1), delta(1), epsilon(1). F(0) has three main subunits: a(1), b(2) and c(10-14). The alpha and beta chains form an alternating ring which encloses part of the gamma chain. F(1) is attached to F(0) by a central stalk formed by the gamma and epsilon chains, while a peripheral stalk is formed by the delta and b chains.</text>
</comment>
<comment type="subcellular location">
    <subcellularLocation>
        <location evidence="1">Cell membrane</location>
        <topology evidence="1">Multi-pass membrane protein</topology>
    </subcellularLocation>
</comment>
<comment type="similarity">
    <text evidence="1">Belongs to the ATPase C chain family.</text>
</comment>
<proteinExistence type="inferred from homology"/>
<protein>
    <recommendedName>
        <fullName evidence="1">ATP synthase subunit c</fullName>
    </recommendedName>
    <alternativeName>
        <fullName evidence="1">ATP synthase F(0) sector subunit c</fullName>
    </alternativeName>
    <alternativeName>
        <fullName evidence="1">F-type ATPase subunit c</fullName>
        <shortName evidence="1">F-ATPase subunit c</shortName>
    </alternativeName>
    <alternativeName>
        <fullName evidence="1">Lipid-binding protein</fullName>
    </alternativeName>
</protein>
<feature type="chain" id="PRO_1000184508" description="ATP synthase subunit c">
    <location>
        <begin position="1"/>
        <end position="70"/>
    </location>
</feature>
<feature type="transmembrane region" description="Helical" evidence="1">
    <location>
        <begin position="4"/>
        <end position="24"/>
    </location>
</feature>
<feature type="transmembrane region" description="Helical" evidence="1">
    <location>
        <begin position="45"/>
        <end position="65"/>
    </location>
</feature>
<feature type="site" description="Reversibly protonated during proton transport" evidence="1">
    <location>
        <position position="54"/>
    </location>
</feature>
<keyword id="KW-0066">ATP synthesis</keyword>
<keyword id="KW-1003">Cell membrane</keyword>
<keyword id="KW-0138">CF(0)</keyword>
<keyword id="KW-0375">Hydrogen ion transport</keyword>
<keyword id="KW-0406">Ion transport</keyword>
<keyword id="KW-0446">Lipid-binding</keyword>
<keyword id="KW-0472">Membrane</keyword>
<keyword id="KW-1185">Reference proteome</keyword>
<keyword id="KW-0812">Transmembrane</keyword>
<keyword id="KW-1133">Transmembrane helix</keyword>
<keyword id="KW-0813">Transport</keyword>
<organism>
    <name type="scientific">Staphylococcus epidermidis (strain ATCC 35984 / DSM 28319 / BCRC 17069 / CCUG 31568 / BM 3577 / RP62A)</name>
    <dbReference type="NCBI Taxonomy" id="176279"/>
    <lineage>
        <taxon>Bacteria</taxon>
        <taxon>Bacillati</taxon>
        <taxon>Bacillota</taxon>
        <taxon>Bacilli</taxon>
        <taxon>Bacillales</taxon>
        <taxon>Staphylococcaceae</taxon>
        <taxon>Staphylococcus</taxon>
    </lineage>
</organism>
<reference key="1">
    <citation type="journal article" date="2005" name="J. Bacteriol.">
        <title>Insights on evolution of virulence and resistance from the complete genome analysis of an early methicillin-resistant Staphylococcus aureus strain and a biofilm-producing methicillin-resistant Staphylococcus epidermidis strain.</title>
        <authorList>
            <person name="Gill S.R."/>
            <person name="Fouts D.E."/>
            <person name="Archer G.L."/>
            <person name="Mongodin E.F."/>
            <person name="DeBoy R.T."/>
            <person name="Ravel J."/>
            <person name="Paulsen I.T."/>
            <person name="Kolonay J.F."/>
            <person name="Brinkac L.M."/>
            <person name="Beanan M.J."/>
            <person name="Dodson R.J."/>
            <person name="Daugherty S.C."/>
            <person name="Madupu R."/>
            <person name="Angiuoli S.V."/>
            <person name="Durkin A.S."/>
            <person name="Haft D.H."/>
            <person name="Vamathevan J.J."/>
            <person name="Khouri H."/>
            <person name="Utterback T.R."/>
            <person name="Lee C."/>
            <person name="Dimitrov G."/>
            <person name="Jiang L."/>
            <person name="Qin H."/>
            <person name="Weidman J."/>
            <person name="Tran K."/>
            <person name="Kang K.H."/>
            <person name="Hance I.R."/>
            <person name="Nelson K.E."/>
            <person name="Fraser C.M."/>
        </authorList>
    </citation>
    <scope>NUCLEOTIDE SEQUENCE [LARGE SCALE GENOMIC DNA]</scope>
    <source>
        <strain>ATCC 35984 / DSM 28319 / BCRC 17069 / CCUG 31568 / BM 3577 / RP62A</strain>
    </source>
</reference>
<accession>Q5HMB4</accession>